<dbReference type="EC" id="2.7.4.3" evidence="1"/>
<dbReference type="EMBL" id="Z29715">
    <property type="protein sequence ID" value="CAA82801.1"/>
    <property type="molecule type" value="Genomic_DNA"/>
</dbReference>
<dbReference type="EMBL" id="HE965805">
    <property type="protein sequence ID" value="CCJ62082.1"/>
    <property type="molecule type" value="Genomic_DNA"/>
</dbReference>
<dbReference type="PIR" id="S43016">
    <property type="entry name" value="S43016"/>
</dbReference>
<dbReference type="RefSeq" id="WP_003812899.1">
    <property type="nucleotide sequence ID" value="NC_018518.1"/>
</dbReference>
<dbReference type="SMR" id="J7RC67"/>
<dbReference type="GeneID" id="56478169"/>
<dbReference type="KEGG" id="bper:BN118_0657"/>
<dbReference type="eggNOG" id="COG0563">
    <property type="taxonomic scope" value="Bacteria"/>
</dbReference>
<dbReference type="HOGENOM" id="CLU_032354_1_2_4"/>
<dbReference type="SABIO-RK" id="J7RC67"/>
<dbReference type="UniPathway" id="UPA00588">
    <property type="reaction ID" value="UER00649"/>
</dbReference>
<dbReference type="Proteomes" id="UP000005250">
    <property type="component" value="Chromosome"/>
</dbReference>
<dbReference type="GO" id="GO:0005737">
    <property type="term" value="C:cytoplasm"/>
    <property type="evidence" value="ECO:0007669"/>
    <property type="project" value="UniProtKB-SubCell"/>
</dbReference>
<dbReference type="GO" id="GO:0004017">
    <property type="term" value="F:adenylate kinase activity"/>
    <property type="evidence" value="ECO:0007669"/>
    <property type="project" value="UniProtKB-UniRule"/>
</dbReference>
<dbReference type="GO" id="GO:0005524">
    <property type="term" value="F:ATP binding"/>
    <property type="evidence" value="ECO:0007669"/>
    <property type="project" value="UniProtKB-UniRule"/>
</dbReference>
<dbReference type="GO" id="GO:0044209">
    <property type="term" value="P:AMP salvage"/>
    <property type="evidence" value="ECO:0007669"/>
    <property type="project" value="UniProtKB-UniRule"/>
</dbReference>
<dbReference type="CDD" id="cd01428">
    <property type="entry name" value="ADK"/>
    <property type="match status" value="1"/>
</dbReference>
<dbReference type="FunFam" id="3.40.50.300:FF:000106">
    <property type="entry name" value="Adenylate kinase mitochondrial"/>
    <property type="match status" value="1"/>
</dbReference>
<dbReference type="Gene3D" id="3.40.50.300">
    <property type="entry name" value="P-loop containing nucleotide triphosphate hydrolases"/>
    <property type="match status" value="1"/>
</dbReference>
<dbReference type="HAMAP" id="MF_00235">
    <property type="entry name" value="Adenylate_kinase_Adk"/>
    <property type="match status" value="1"/>
</dbReference>
<dbReference type="InterPro" id="IPR006259">
    <property type="entry name" value="Adenyl_kin_sub"/>
</dbReference>
<dbReference type="InterPro" id="IPR000850">
    <property type="entry name" value="Adenylat/UMP-CMP_kin"/>
</dbReference>
<dbReference type="InterPro" id="IPR033690">
    <property type="entry name" value="Adenylat_kinase_CS"/>
</dbReference>
<dbReference type="InterPro" id="IPR007862">
    <property type="entry name" value="Adenylate_kinase_lid-dom"/>
</dbReference>
<dbReference type="InterPro" id="IPR027417">
    <property type="entry name" value="P-loop_NTPase"/>
</dbReference>
<dbReference type="NCBIfam" id="TIGR01351">
    <property type="entry name" value="adk"/>
    <property type="match status" value="1"/>
</dbReference>
<dbReference type="NCBIfam" id="NF001379">
    <property type="entry name" value="PRK00279.1-1"/>
    <property type="match status" value="1"/>
</dbReference>
<dbReference type="NCBIfam" id="NF001380">
    <property type="entry name" value="PRK00279.1-2"/>
    <property type="match status" value="1"/>
</dbReference>
<dbReference type="NCBIfam" id="NF001381">
    <property type="entry name" value="PRK00279.1-3"/>
    <property type="match status" value="1"/>
</dbReference>
<dbReference type="NCBIfam" id="NF011100">
    <property type="entry name" value="PRK14527.1"/>
    <property type="match status" value="1"/>
</dbReference>
<dbReference type="PANTHER" id="PTHR23359">
    <property type="entry name" value="NUCLEOTIDE KINASE"/>
    <property type="match status" value="1"/>
</dbReference>
<dbReference type="Pfam" id="PF00406">
    <property type="entry name" value="ADK"/>
    <property type="match status" value="1"/>
</dbReference>
<dbReference type="Pfam" id="PF05191">
    <property type="entry name" value="ADK_lid"/>
    <property type="match status" value="1"/>
</dbReference>
<dbReference type="PRINTS" id="PR00094">
    <property type="entry name" value="ADENYLTKNASE"/>
</dbReference>
<dbReference type="SUPFAM" id="SSF52540">
    <property type="entry name" value="P-loop containing nucleoside triphosphate hydrolases"/>
    <property type="match status" value="1"/>
</dbReference>
<dbReference type="PROSITE" id="PS00113">
    <property type="entry name" value="ADENYLATE_KINASE"/>
    <property type="match status" value="1"/>
</dbReference>
<sequence length="218" mass="23715">MRLILLGPPGAGKGTQAAFLTQHYGIPQISTGDMLRAAVKAGTPLGLEAKKVMDAGGLVSDDLIIGLVRDRLTQPDCANGYLFDGFPRTIPQADALKSAGIALDYVVEIEVPESDIIERMSGRRVHPASGRSYHVRFNPPKAEGVDDVTGEPLVQRDDDREETVRHRLNVYQNQTRPLVDYYSSWAQSDAAAAPKYRKISGVGSVDEIKSRLSQALQS</sequence>
<name>KAD_BORP1</name>
<reference key="1">
    <citation type="journal article" date="1993" name="Eur. J. Biochem.">
        <title>Structural and physico-chemical characteristics of Bordetella pertussis adenylate kinase, a tryptophan-containing enzyme.</title>
        <authorList>
            <person name="Gilles A.M."/>
            <person name="Sismeiro O."/>
            <person name="Munier H."/>
            <person name="Fabian H."/>
            <person name="Mantsch H.H."/>
            <person name="Surewicz W.K."/>
            <person name="Craescu C.C."/>
            <person name="Barzu O."/>
            <person name="Danchin A."/>
        </authorList>
    </citation>
    <scope>NUCLEOTIDE SEQUENCE [GENOMIC DNA]</scope>
    <scope>CATALYTIC ACTIVITY</scope>
    <scope>BIOPHYSICOCHEMICAL PROPERTIES</scope>
    <source>
        <strain>ATCC 9797 / DSM 5571 / CCUG 30873 / LMG 14455 / NCTC 10739 / 18323</strain>
    </source>
</reference>
<reference key="2">
    <citation type="journal article" date="2012" name="BMC Genomics">
        <title>Comparative genomics of the classical Bordetella subspecies: the evolution and exchange of virulence-associated diversity amongst closely related pathogens.</title>
        <authorList>
            <person name="Park J."/>
            <person name="Zhang Y."/>
            <person name="Buboltz A.M."/>
            <person name="Zhang X."/>
            <person name="Schuster S.C."/>
            <person name="Ahuja U."/>
            <person name="Liu M."/>
            <person name="Miller J.F."/>
            <person name="Sebaihia M."/>
            <person name="Bentley S.D."/>
            <person name="Parkhill J."/>
            <person name="Harvill E.T."/>
        </authorList>
    </citation>
    <scope>NUCLEOTIDE SEQUENCE [LARGE SCALE GENOMIC DNA]</scope>
    <source>
        <strain>ATCC 9797 / DSM 5571 / CCUG 30873 / LMG 14455 / NCTC 10739 / 18323</strain>
    </source>
</reference>
<feature type="chain" id="PRO_0000421305" description="Adenylate kinase">
    <location>
        <begin position="1"/>
        <end position="218"/>
    </location>
</feature>
<feature type="region of interest" description="NMP" evidence="1">
    <location>
        <begin position="30"/>
        <end position="59"/>
    </location>
</feature>
<feature type="region of interest" description="LID" evidence="1">
    <location>
        <begin position="122"/>
        <end position="159"/>
    </location>
</feature>
<feature type="binding site" evidence="1">
    <location>
        <begin position="10"/>
        <end position="15"/>
    </location>
    <ligand>
        <name>ATP</name>
        <dbReference type="ChEBI" id="CHEBI:30616"/>
    </ligand>
</feature>
<feature type="binding site" evidence="1">
    <location>
        <position position="31"/>
    </location>
    <ligand>
        <name>AMP</name>
        <dbReference type="ChEBI" id="CHEBI:456215"/>
    </ligand>
</feature>
<feature type="binding site" evidence="1">
    <location>
        <position position="36"/>
    </location>
    <ligand>
        <name>AMP</name>
        <dbReference type="ChEBI" id="CHEBI:456215"/>
    </ligand>
</feature>
<feature type="binding site" evidence="1">
    <location>
        <begin position="57"/>
        <end position="59"/>
    </location>
    <ligand>
        <name>AMP</name>
        <dbReference type="ChEBI" id="CHEBI:456215"/>
    </ligand>
</feature>
<feature type="binding site" evidence="1">
    <location>
        <begin position="85"/>
        <end position="88"/>
    </location>
    <ligand>
        <name>AMP</name>
        <dbReference type="ChEBI" id="CHEBI:456215"/>
    </ligand>
</feature>
<feature type="binding site" evidence="1">
    <location>
        <position position="92"/>
    </location>
    <ligand>
        <name>AMP</name>
        <dbReference type="ChEBI" id="CHEBI:456215"/>
    </ligand>
</feature>
<feature type="binding site" evidence="1">
    <location>
        <position position="123"/>
    </location>
    <ligand>
        <name>ATP</name>
        <dbReference type="ChEBI" id="CHEBI:30616"/>
    </ligand>
</feature>
<feature type="binding site" evidence="1">
    <location>
        <begin position="132"/>
        <end position="133"/>
    </location>
    <ligand>
        <name>ATP</name>
        <dbReference type="ChEBI" id="CHEBI:30616"/>
    </ligand>
</feature>
<feature type="binding site" evidence="1">
    <location>
        <position position="156"/>
    </location>
    <ligand>
        <name>AMP</name>
        <dbReference type="ChEBI" id="CHEBI:456215"/>
    </ligand>
</feature>
<feature type="binding site" evidence="1">
    <location>
        <position position="167"/>
    </location>
    <ligand>
        <name>AMP</name>
        <dbReference type="ChEBI" id="CHEBI:456215"/>
    </ligand>
</feature>
<feature type="binding site" evidence="1">
    <location>
        <position position="203"/>
    </location>
    <ligand>
        <name>ATP</name>
        <dbReference type="ChEBI" id="CHEBI:30616"/>
    </ligand>
</feature>
<feature type="sequence conflict" description="In Ref. 1; CAA82801." evidence="3" ref="1">
    <original>G</original>
    <variation>E</variation>
    <location>
        <position position="122"/>
    </location>
</feature>
<gene>
    <name evidence="1" type="primary">adk</name>
    <name type="ordered locus">BN118_0657</name>
</gene>
<organism>
    <name type="scientific">Bordetella pertussis (strain ATCC 9797 / DSM 5571 / CCUG 30873 / LMG 14455 / NCTC 10739 / 18323)</name>
    <dbReference type="NCBI Taxonomy" id="568706"/>
    <lineage>
        <taxon>Bacteria</taxon>
        <taxon>Pseudomonadati</taxon>
        <taxon>Pseudomonadota</taxon>
        <taxon>Betaproteobacteria</taxon>
        <taxon>Burkholderiales</taxon>
        <taxon>Alcaligenaceae</taxon>
        <taxon>Bordetella</taxon>
    </lineage>
</organism>
<protein>
    <recommendedName>
        <fullName evidence="1">Adenylate kinase</fullName>
        <shortName evidence="1">AK</shortName>
        <ecNumber evidence="1">2.7.4.3</ecNumber>
    </recommendedName>
    <alternativeName>
        <fullName evidence="1">ATP-AMP transphosphorylase</fullName>
    </alternativeName>
    <alternativeName>
        <fullName evidence="1">ATP:AMP phosphotransferase</fullName>
    </alternativeName>
    <alternativeName>
        <fullName evidence="1">Adenylate monophosphate kinase</fullName>
    </alternativeName>
</protein>
<keyword id="KW-0067">ATP-binding</keyword>
<keyword id="KW-0963">Cytoplasm</keyword>
<keyword id="KW-0418">Kinase</keyword>
<keyword id="KW-0545">Nucleotide biosynthesis</keyword>
<keyword id="KW-0547">Nucleotide-binding</keyword>
<keyword id="KW-0808">Transferase</keyword>
<proteinExistence type="evidence at protein level"/>
<accession>J7RC67</accession>
<accession>P39068</accession>
<comment type="function">
    <text evidence="1">Catalyzes the reversible transfer of the terminal phosphate group between ATP and AMP. Plays an important role in cellular energy homeostasis and in adenine nucleotide metabolism.</text>
</comment>
<comment type="catalytic activity">
    <reaction evidence="1 2">
        <text>AMP + ATP = 2 ADP</text>
        <dbReference type="Rhea" id="RHEA:12973"/>
        <dbReference type="ChEBI" id="CHEBI:30616"/>
        <dbReference type="ChEBI" id="CHEBI:456215"/>
        <dbReference type="ChEBI" id="CHEBI:456216"/>
        <dbReference type="EC" id="2.7.4.3"/>
    </reaction>
</comment>
<comment type="biophysicochemical properties">
    <kinetics>
        <KM evidence="2">36 uM for ATP</KM>
        <KM evidence="2">82 uM for AMP</KM>
        <KM evidence="2">100 uM for ADP</KM>
        <Vmax evidence="2">536.0 umol/min/mg enzyme toward ATP</Vmax>
        <Vmax evidence="2">420.0 umol/min/mg enzyme toward ADP</Vmax>
    </kinetics>
</comment>
<comment type="pathway">
    <text evidence="1">Purine metabolism; AMP biosynthesis via salvage pathway; AMP from ADP: step 1/1.</text>
</comment>
<comment type="subunit">
    <text evidence="1">Monomer.</text>
</comment>
<comment type="subcellular location">
    <subcellularLocation>
        <location evidence="1">Cytoplasm</location>
    </subcellularLocation>
</comment>
<comment type="domain">
    <text evidence="1">Consists of three domains, a large central CORE domain and two small peripheral domains, NMPbind and LID, which undergo movements during catalysis. The LID domain closes over the site of phosphoryl transfer upon ATP binding. Assembling and dissambling the active center during each catalytic cycle provides an effective means to prevent ATP hydrolysis.</text>
</comment>
<comment type="similarity">
    <text evidence="1">Belongs to the adenylate kinase family.</text>
</comment>
<evidence type="ECO:0000255" key="1">
    <source>
        <dbReference type="HAMAP-Rule" id="MF_00235"/>
    </source>
</evidence>
<evidence type="ECO:0000269" key="2">
    <source>
    </source>
</evidence>
<evidence type="ECO:0000305" key="3"/>